<comment type="function">
    <text evidence="1 2">Functions in complex with FlhC as a master transcriptional regulator that regulates transcription of several flagellar and non-flagellar operons by binding to their promoter region. Activates expression of class 2 flagellar genes, including fliA, which is a flagellum-specific sigma factor that turns on the class 3 genes. Also regulates genes whose products function in a variety of physiological pathways.</text>
</comment>
<comment type="subunit">
    <text evidence="1">Homodimer; disulfide-linked. Forms a heterohexamer composed of two FlhC and four FlhD subunits. Each FlhC binds a FlhD dimer, forming a heterotrimer, and a hexamer assembles by dimerization of two heterotrimers.</text>
</comment>
<comment type="subcellular location">
    <subcellularLocation>
        <location evidence="1">Cytoplasm</location>
    </subcellularLocation>
</comment>
<comment type="domain">
    <text evidence="1">The C-terminal region contains a putative helix-turn-helix (HTH) motif, suggesting that this region may bind DNA.</text>
</comment>
<comment type="similarity">
    <text evidence="1">Belongs to the FlhD family.</text>
</comment>
<keyword id="KW-0010">Activator</keyword>
<keyword id="KW-1005">Bacterial flagellum biogenesis</keyword>
<keyword id="KW-0963">Cytoplasm</keyword>
<keyword id="KW-1015">Disulfide bond</keyword>
<keyword id="KW-0238">DNA-binding</keyword>
<keyword id="KW-0804">Transcription</keyword>
<keyword id="KW-0805">Transcription regulation</keyword>
<keyword id="KW-0843">Virulence</keyword>
<organism>
    <name type="scientific">Serratia marcescens</name>
    <dbReference type="NCBI Taxonomy" id="615"/>
    <lineage>
        <taxon>Bacteria</taxon>
        <taxon>Pseudomonadati</taxon>
        <taxon>Pseudomonadota</taxon>
        <taxon>Gammaproteobacteria</taxon>
        <taxon>Enterobacterales</taxon>
        <taxon>Yersiniaceae</taxon>
        <taxon>Serratia</taxon>
    </lineage>
</organism>
<protein>
    <recommendedName>
        <fullName evidence="1">Flagellar transcriptional regulator FlhD</fullName>
    </recommendedName>
</protein>
<evidence type="ECO:0000255" key="1">
    <source>
        <dbReference type="HAMAP-Rule" id="MF_00725"/>
    </source>
</evidence>
<evidence type="ECO:0000269" key="2">
    <source>
    </source>
</evidence>
<dbReference type="EMBL" id="AF077334">
    <property type="protein sequence ID" value="AAC27633.1"/>
    <property type="molecule type" value="Genomic_DNA"/>
</dbReference>
<dbReference type="SMR" id="O85806"/>
<dbReference type="IntAct" id="O85806">
    <property type="interactions" value="1"/>
</dbReference>
<dbReference type="STRING" id="273526.SMDB11_2238"/>
<dbReference type="OrthoDB" id="5298036at2"/>
<dbReference type="PHI-base" id="PHI:12271"/>
<dbReference type="PHI-base" id="PHI:12272"/>
<dbReference type="PHI-base" id="PHI:12275"/>
<dbReference type="PHI-base" id="PHI:12276"/>
<dbReference type="GO" id="GO:0005737">
    <property type="term" value="C:cytoplasm"/>
    <property type="evidence" value="ECO:0007669"/>
    <property type="project" value="UniProtKB-SubCell"/>
</dbReference>
<dbReference type="GO" id="GO:0003677">
    <property type="term" value="F:DNA binding"/>
    <property type="evidence" value="ECO:0007669"/>
    <property type="project" value="UniProtKB-UniRule"/>
</dbReference>
<dbReference type="GO" id="GO:0044780">
    <property type="term" value="P:bacterial-type flagellum assembly"/>
    <property type="evidence" value="ECO:0007669"/>
    <property type="project" value="InterPro"/>
</dbReference>
<dbReference type="GO" id="GO:0045893">
    <property type="term" value="P:positive regulation of DNA-templated transcription"/>
    <property type="evidence" value="ECO:0007669"/>
    <property type="project" value="InterPro"/>
</dbReference>
<dbReference type="GO" id="GO:1902208">
    <property type="term" value="P:regulation of bacterial-type flagellum assembly"/>
    <property type="evidence" value="ECO:0007669"/>
    <property type="project" value="UniProtKB-UniRule"/>
</dbReference>
<dbReference type="Gene3D" id="1.10.4000.10">
    <property type="entry name" value="Flagellar transcriptional activator FlhD"/>
    <property type="match status" value="1"/>
</dbReference>
<dbReference type="HAMAP" id="MF_00725">
    <property type="entry name" value="FlhD"/>
    <property type="match status" value="1"/>
</dbReference>
<dbReference type="InterPro" id="IPR023559">
    <property type="entry name" value="Flagellar_FlhD"/>
</dbReference>
<dbReference type="InterPro" id="IPR036194">
    <property type="entry name" value="FlhD_sf"/>
</dbReference>
<dbReference type="NCBIfam" id="NF002783">
    <property type="entry name" value="PRK02909.1-1"/>
    <property type="match status" value="1"/>
</dbReference>
<dbReference type="Pfam" id="PF05247">
    <property type="entry name" value="FlhD"/>
    <property type="match status" value="1"/>
</dbReference>
<dbReference type="SUPFAM" id="SSF63592">
    <property type="entry name" value="Flagellar transcriptional activator FlhD"/>
    <property type="match status" value="1"/>
</dbReference>
<name>FLHD_SERMA</name>
<gene>
    <name evidence="1" type="primary">flhD</name>
</gene>
<reference key="1">
    <citation type="journal article" date="2000" name="J. Biomed. Sci.">
        <title>Role of flhDC in the expression of the nuclease gene nucA, cell division and flagellar synthesis in Serratia marcescens.</title>
        <authorList>
            <person name="Lai H.C."/>
            <person name="Luh K.T."/>
            <person name="Ho S.W."/>
            <person name="Swift S."/>
        </authorList>
    </citation>
    <scope>NUCLEOTIDE SEQUENCE [GENOMIC DNA]</scope>
    <scope>FUNCTION</scope>
    <source>
        <strain>CH1</strain>
    </source>
</reference>
<feature type="chain" id="PRO_0000182726" description="Flagellar transcriptional regulator FlhD">
    <location>
        <begin position="1"/>
        <end position="119"/>
    </location>
</feature>
<feature type="disulfide bond" description="Interchain" evidence="1">
    <location>
        <position position="68"/>
    </location>
</feature>
<accession>O85806</accession>
<sequence length="119" mass="13456">MGNMGTSELLKHIYDINLSYLLLAQRLINDEKASAMFRLGIDETMADALAQLTLPQMVKLAETNQLVCHFRFNESQTIERLTKESRVDDLQQIHTGILLSSHLLQELSSKDASPTKKRA</sequence>
<proteinExistence type="inferred from homology"/>